<proteinExistence type="evidence at protein level"/>
<protein>
    <recommendedName>
        <fullName evidence="4">E3 ubiquitin-protein ligase MPSR1</fullName>
        <ecNumber evidence="2">2.3.2.27</ecNumber>
    </recommendedName>
    <alternativeName>
        <fullName evidence="3">Protein MISFOLDED PROTEIN SENSING RING E3 LIGASE 1</fullName>
    </alternativeName>
    <alternativeName>
        <fullName evidence="4">RING-type E3 ubiquitin transferase MPSR1</fullName>
    </alternativeName>
</protein>
<sequence length="204" mass="22735">MATEQEAEVGTETSSVSGRFLRNRDLYLFLPFLLGFSDQESSNGDDDDVASSRERIILVNPFTQGMIVLEGSSGMNPLLRSLLESREEGRPPASKASIDAMPIVEIDGCEGECVICLEEWKSEETVKEMPCKHRFHGGCIEKWLGFHGSCPVCRYEMPVDGDEIGKKRNDGNEIWVRFSFNDGRRIRDFSAQDGGNSDGVESEN</sequence>
<accession>Q9LQX2</accession>
<accession>Q8LCT4</accession>
<comment type="function">
    <text evidence="2">E3 ubiquitin-protein ligase involved in protein quality control (PQC) under proteotoxic stress. Is essential to plant survival under proteotoxic stress. Functions by removing damaged proteins before they form cytotoxic aggregates. Recognizes misfolded proteins selectively and tethers polyubiquitin chains to the proteins directly for subsequent degradation by the 26S proteasome pathway. Targets misfolded proteins independently of cytoplasmic chaperones. Associates with the 26S proteasome and sustains the structural integrity of the proteasome complex at the initial stage of proteotoxic stress. Under normal conditions, MPSR1 becomes highly unstable by its autoubiquitination activity and is stabilized during proteotoxic stress by conjugating ubiquitins on misfolded proteins.</text>
</comment>
<comment type="catalytic activity">
    <reaction evidence="2">
        <text>S-ubiquitinyl-[E2 ubiquitin-conjugating enzyme]-L-cysteine + [acceptor protein]-L-lysine = [E2 ubiquitin-conjugating enzyme]-L-cysteine + N(6)-ubiquitinyl-[acceptor protein]-L-lysine.</text>
        <dbReference type="EC" id="2.3.2.27"/>
    </reaction>
</comment>
<comment type="subcellular location">
    <subcellularLocation>
        <location evidence="2">Cytoplasm</location>
    </subcellularLocation>
</comment>
<comment type="induction">
    <text evidence="2">Induced by arsenite and the proline toxic analog azetidine-2-carboxylate.</text>
</comment>
<comment type="PTM">
    <text evidence="2">Autoubiquitinated.</text>
</comment>
<name>MPSR1_ARATH</name>
<dbReference type="EC" id="2.3.2.27" evidence="2"/>
<dbReference type="EMBL" id="AC006535">
    <property type="protein sequence ID" value="AAF87040.1"/>
    <property type="molecule type" value="Genomic_DNA"/>
</dbReference>
<dbReference type="EMBL" id="CP002684">
    <property type="protein sequence ID" value="AEE30743.1"/>
    <property type="molecule type" value="Genomic_DNA"/>
</dbReference>
<dbReference type="EMBL" id="AF361638">
    <property type="protein sequence ID" value="AAK32806.1"/>
    <property type="molecule type" value="mRNA"/>
</dbReference>
<dbReference type="EMBL" id="AY052705">
    <property type="protein sequence ID" value="AAK96609.1"/>
    <property type="molecule type" value="mRNA"/>
</dbReference>
<dbReference type="EMBL" id="AY055097">
    <property type="protein sequence ID" value="AAL05897.1"/>
    <property type="molecule type" value="mRNA"/>
</dbReference>
<dbReference type="EMBL" id="AY086415">
    <property type="protein sequence ID" value="AAM63417.1"/>
    <property type="molecule type" value="mRNA"/>
</dbReference>
<dbReference type="RefSeq" id="NP_564263.1">
    <property type="nucleotide sequence ID" value="NM_102444.3"/>
</dbReference>
<dbReference type="SMR" id="Q9LQX2"/>
<dbReference type="FunCoup" id="Q9LQX2">
    <property type="interactions" value="1"/>
</dbReference>
<dbReference type="IntAct" id="Q9LQX2">
    <property type="interactions" value="1"/>
</dbReference>
<dbReference type="STRING" id="3702.Q9LQX2"/>
<dbReference type="PaxDb" id="3702-AT1G26800.1"/>
<dbReference type="EnsemblPlants" id="AT1G26800.1">
    <property type="protein sequence ID" value="AT1G26800.1"/>
    <property type="gene ID" value="AT1G26800"/>
</dbReference>
<dbReference type="GeneID" id="839223"/>
<dbReference type="Gramene" id="AT1G26800.1">
    <property type="protein sequence ID" value="AT1G26800.1"/>
    <property type="gene ID" value="AT1G26800"/>
</dbReference>
<dbReference type="KEGG" id="ath:AT1G26800"/>
<dbReference type="Araport" id="AT1G26800"/>
<dbReference type="TAIR" id="AT1G26800">
    <property type="gene designation" value="MPSR1"/>
</dbReference>
<dbReference type="eggNOG" id="KOG0800">
    <property type="taxonomic scope" value="Eukaryota"/>
</dbReference>
<dbReference type="HOGENOM" id="CLU_091490_0_0_1"/>
<dbReference type="InParanoid" id="Q9LQX2"/>
<dbReference type="OMA" id="HERIILI"/>
<dbReference type="OrthoDB" id="8062037at2759"/>
<dbReference type="PhylomeDB" id="Q9LQX2"/>
<dbReference type="PRO" id="PR:Q9LQX2"/>
<dbReference type="Proteomes" id="UP000006548">
    <property type="component" value="Chromosome 1"/>
</dbReference>
<dbReference type="ExpressionAtlas" id="Q9LQX2">
    <property type="expression patterns" value="baseline and differential"/>
</dbReference>
<dbReference type="GO" id="GO:0005737">
    <property type="term" value="C:cytoplasm"/>
    <property type="evidence" value="ECO:0000314"/>
    <property type="project" value="UniProtKB"/>
</dbReference>
<dbReference type="GO" id="GO:0005829">
    <property type="term" value="C:cytosol"/>
    <property type="evidence" value="ECO:0000314"/>
    <property type="project" value="TAIR"/>
</dbReference>
<dbReference type="GO" id="GO:0051787">
    <property type="term" value="F:misfolded protein binding"/>
    <property type="evidence" value="ECO:0000314"/>
    <property type="project" value="TAIR"/>
</dbReference>
<dbReference type="GO" id="GO:0061630">
    <property type="term" value="F:ubiquitin protein ligase activity"/>
    <property type="evidence" value="ECO:0000314"/>
    <property type="project" value="UniProtKB"/>
</dbReference>
<dbReference type="GO" id="GO:0008270">
    <property type="term" value="F:zinc ion binding"/>
    <property type="evidence" value="ECO:0007669"/>
    <property type="project" value="UniProtKB-KW"/>
</dbReference>
<dbReference type="GO" id="GO:0071456">
    <property type="term" value="P:cellular response to hypoxia"/>
    <property type="evidence" value="ECO:0007007"/>
    <property type="project" value="TAIR"/>
</dbReference>
<dbReference type="GO" id="GO:0071218">
    <property type="term" value="P:cellular response to misfolded protein"/>
    <property type="evidence" value="ECO:0000314"/>
    <property type="project" value="TAIR"/>
</dbReference>
<dbReference type="GO" id="GO:0071629">
    <property type="term" value="P:cytoplasm protein quality control by the ubiquitin-proteasome system"/>
    <property type="evidence" value="ECO:0000315"/>
    <property type="project" value="UniProtKB"/>
</dbReference>
<dbReference type="GO" id="GO:0051865">
    <property type="term" value="P:protein autoubiquitination"/>
    <property type="evidence" value="ECO:0000314"/>
    <property type="project" value="UniProtKB"/>
</dbReference>
<dbReference type="GO" id="GO:0000209">
    <property type="term" value="P:protein polyubiquitination"/>
    <property type="evidence" value="ECO:0000315"/>
    <property type="project" value="UniProtKB"/>
</dbReference>
<dbReference type="GO" id="GO:0061635">
    <property type="term" value="P:regulation of protein complex stability"/>
    <property type="evidence" value="ECO:0000315"/>
    <property type="project" value="UniProtKB"/>
</dbReference>
<dbReference type="FunFam" id="3.30.40.10:FF:000127">
    <property type="entry name" value="E3 ubiquitin-protein ligase RNF181"/>
    <property type="match status" value="1"/>
</dbReference>
<dbReference type="Gene3D" id="3.30.40.10">
    <property type="entry name" value="Zinc/RING finger domain, C3HC4 (zinc finger)"/>
    <property type="match status" value="1"/>
</dbReference>
<dbReference type="InterPro" id="IPR001841">
    <property type="entry name" value="Znf_RING"/>
</dbReference>
<dbReference type="InterPro" id="IPR013083">
    <property type="entry name" value="Znf_RING/FYVE/PHD"/>
</dbReference>
<dbReference type="PANTHER" id="PTHR15710:SF132">
    <property type="entry name" value="E3 UBIQUITIN-PROTEIN LIGASE MPSR1"/>
    <property type="match status" value="1"/>
</dbReference>
<dbReference type="PANTHER" id="PTHR15710">
    <property type="entry name" value="E3 UBIQUITIN-PROTEIN LIGASE PRAJA"/>
    <property type="match status" value="1"/>
</dbReference>
<dbReference type="Pfam" id="PF13639">
    <property type="entry name" value="zf-RING_2"/>
    <property type="match status" value="1"/>
</dbReference>
<dbReference type="SMART" id="SM00184">
    <property type="entry name" value="RING"/>
    <property type="match status" value="1"/>
</dbReference>
<dbReference type="SUPFAM" id="SSF57850">
    <property type="entry name" value="RING/U-box"/>
    <property type="match status" value="1"/>
</dbReference>
<dbReference type="PROSITE" id="PS50089">
    <property type="entry name" value="ZF_RING_2"/>
    <property type="match status" value="1"/>
</dbReference>
<organism>
    <name type="scientific">Arabidopsis thaliana</name>
    <name type="common">Mouse-ear cress</name>
    <dbReference type="NCBI Taxonomy" id="3702"/>
    <lineage>
        <taxon>Eukaryota</taxon>
        <taxon>Viridiplantae</taxon>
        <taxon>Streptophyta</taxon>
        <taxon>Embryophyta</taxon>
        <taxon>Tracheophyta</taxon>
        <taxon>Spermatophyta</taxon>
        <taxon>Magnoliopsida</taxon>
        <taxon>eudicotyledons</taxon>
        <taxon>Gunneridae</taxon>
        <taxon>Pentapetalae</taxon>
        <taxon>rosids</taxon>
        <taxon>malvids</taxon>
        <taxon>Brassicales</taxon>
        <taxon>Brassicaceae</taxon>
        <taxon>Camelineae</taxon>
        <taxon>Arabidopsis</taxon>
    </lineage>
</organism>
<evidence type="ECO:0000255" key="1">
    <source>
        <dbReference type="PROSITE-ProRule" id="PRU00175"/>
    </source>
</evidence>
<evidence type="ECO:0000269" key="2">
    <source>
    </source>
</evidence>
<evidence type="ECO:0000303" key="3">
    <source>
    </source>
</evidence>
<evidence type="ECO:0000305" key="4"/>
<evidence type="ECO:0000312" key="5">
    <source>
        <dbReference type="Araport" id="AT1G26800"/>
    </source>
</evidence>
<evidence type="ECO:0000312" key="6">
    <source>
        <dbReference type="EMBL" id="AAF87040.1"/>
    </source>
</evidence>
<keyword id="KW-0963">Cytoplasm</keyword>
<keyword id="KW-0479">Metal-binding</keyword>
<keyword id="KW-1185">Reference proteome</keyword>
<keyword id="KW-0346">Stress response</keyword>
<keyword id="KW-0808">Transferase</keyword>
<keyword id="KW-0832">Ubl conjugation</keyword>
<keyword id="KW-0833">Ubl conjugation pathway</keyword>
<keyword id="KW-0862">Zinc</keyword>
<keyword id="KW-0863">Zinc-finger</keyword>
<reference key="1">
    <citation type="journal article" date="2000" name="Nature">
        <title>Sequence and analysis of chromosome 1 of the plant Arabidopsis thaliana.</title>
        <authorList>
            <person name="Theologis A."/>
            <person name="Ecker J.R."/>
            <person name="Palm C.J."/>
            <person name="Federspiel N.A."/>
            <person name="Kaul S."/>
            <person name="White O."/>
            <person name="Alonso J."/>
            <person name="Altafi H."/>
            <person name="Araujo R."/>
            <person name="Bowman C.L."/>
            <person name="Brooks S.Y."/>
            <person name="Buehler E."/>
            <person name="Chan A."/>
            <person name="Chao Q."/>
            <person name="Chen H."/>
            <person name="Cheuk R.F."/>
            <person name="Chin C.W."/>
            <person name="Chung M.K."/>
            <person name="Conn L."/>
            <person name="Conway A.B."/>
            <person name="Conway A.R."/>
            <person name="Creasy T.H."/>
            <person name="Dewar K."/>
            <person name="Dunn P."/>
            <person name="Etgu P."/>
            <person name="Feldblyum T.V."/>
            <person name="Feng J.-D."/>
            <person name="Fong B."/>
            <person name="Fujii C.Y."/>
            <person name="Gill J.E."/>
            <person name="Goldsmith A.D."/>
            <person name="Haas B."/>
            <person name="Hansen N.F."/>
            <person name="Hughes B."/>
            <person name="Huizar L."/>
            <person name="Hunter J.L."/>
            <person name="Jenkins J."/>
            <person name="Johnson-Hopson C."/>
            <person name="Khan S."/>
            <person name="Khaykin E."/>
            <person name="Kim C.J."/>
            <person name="Koo H.L."/>
            <person name="Kremenetskaia I."/>
            <person name="Kurtz D.B."/>
            <person name="Kwan A."/>
            <person name="Lam B."/>
            <person name="Langin-Hooper S."/>
            <person name="Lee A."/>
            <person name="Lee J.M."/>
            <person name="Lenz C.A."/>
            <person name="Li J.H."/>
            <person name="Li Y.-P."/>
            <person name="Lin X."/>
            <person name="Liu S.X."/>
            <person name="Liu Z.A."/>
            <person name="Luros J.S."/>
            <person name="Maiti R."/>
            <person name="Marziali A."/>
            <person name="Militscher J."/>
            <person name="Miranda M."/>
            <person name="Nguyen M."/>
            <person name="Nierman W.C."/>
            <person name="Osborne B.I."/>
            <person name="Pai G."/>
            <person name="Peterson J."/>
            <person name="Pham P.K."/>
            <person name="Rizzo M."/>
            <person name="Rooney T."/>
            <person name="Rowley D."/>
            <person name="Sakano H."/>
            <person name="Salzberg S.L."/>
            <person name="Schwartz J.R."/>
            <person name="Shinn P."/>
            <person name="Southwick A.M."/>
            <person name="Sun H."/>
            <person name="Tallon L.J."/>
            <person name="Tambunga G."/>
            <person name="Toriumi M.J."/>
            <person name="Town C.D."/>
            <person name="Utterback T."/>
            <person name="Van Aken S."/>
            <person name="Vaysberg M."/>
            <person name="Vysotskaia V.S."/>
            <person name="Walker M."/>
            <person name="Wu D."/>
            <person name="Yu G."/>
            <person name="Fraser C.M."/>
            <person name="Venter J.C."/>
            <person name="Davis R.W."/>
        </authorList>
    </citation>
    <scope>NUCLEOTIDE SEQUENCE [LARGE SCALE GENOMIC DNA]</scope>
    <source>
        <strain>cv. Columbia</strain>
    </source>
</reference>
<reference key="2">
    <citation type="journal article" date="2017" name="Plant J.">
        <title>Araport11: a complete reannotation of the Arabidopsis thaliana reference genome.</title>
        <authorList>
            <person name="Cheng C.Y."/>
            <person name="Krishnakumar V."/>
            <person name="Chan A.P."/>
            <person name="Thibaud-Nissen F."/>
            <person name="Schobel S."/>
            <person name="Town C.D."/>
        </authorList>
    </citation>
    <scope>GENOME REANNOTATION</scope>
    <source>
        <strain>cv. Columbia</strain>
    </source>
</reference>
<reference key="3">
    <citation type="journal article" date="2003" name="Science">
        <title>Empirical analysis of transcriptional activity in the Arabidopsis genome.</title>
        <authorList>
            <person name="Yamada K."/>
            <person name="Lim J."/>
            <person name="Dale J.M."/>
            <person name="Chen H."/>
            <person name="Shinn P."/>
            <person name="Palm C.J."/>
            <person name="Southwick A.M."/>
            <person name="Wu H.C."/>
            <person name="Kim C.J."/>
            <person name="Nguyen M."/>
            <person name="Pham P.K."/>
            <person name="Cheuk R.F."/>
            <person name="Karlin-Newmann G."/>
            <person name="Liu S.X."/>
            <person name="Lam B."/>
            <person name="Sakano H."/>
            <person name="Wu T."/>
            <person name="Yu G."/>
            <person name="Miranda M."/>
            <person name="Quach H.L."/>
            <person name="Tripp M."/>
            <person name="Chang C.H."/>
            <person name="Lee J.M."/>
            <person name="Toriumi M.J."/>
            <person name="Chan M.M."/>
            <person name="Tang C.C."/>
            <person name="Onodera C.S."/>
            <person name="Deng J.M."/>
            <person name="Akiyama K."/>
            <person name="Ansari Y."/>
            <person name="Arakawa T."/>
            <person name="Banh J."/>
            <person name="Banno F."/>
            <person name="Bowser L."/>
            <person name="Brooks S.Y."/>
            <person name="Carninci P."/>
            <person name="Chao Q."/>
            <person name="Choy N."/>
            <person name="Enju A."/>
            <person name="Goldsmith A.D."/>
            <person name="Gurjal M."/>
            <person name="Hansen N.F."/>
            <person name="Hayashizaki Y."/>
            <person name="Johnson-Hopson C."/>
            <person name="Hsuan V.W."/>
            <person name="Iida K."/>
            <person name="Karnes M."/>
            <person name="Khan S."/>
            <person name="Koesema E."/>
            <person name="Ishida J."/>
            <person name="Jiang P.X."/>
            <person name="Jones T."/>
            <person name="Kawai J."/>
            <person name="Kamiya A."/>
            <person name="Meyers C."/>
            <person name="Nakajima M."/>
            <person name="Narusaka M."/>
            <person name="Seki M."/>
            <person name="Sakurai T."/>
            <person name="Satou M."/>
            <person name="Tamse R."/>
            <person name="Vaysberg M."/>
            <person name="Wallender E.K."/>
            <person name="Wong C."/>
            <person name="Yamamura Y."/>
            <person name="Yuan S."/>
            <person name="Shinozaki K."/>
            <person name="Davis R.W."/>
            <person name="Theologis A."/>
            <person name="Ecker J.R."/>
        </authorList>
    </citation>
    <scope>NUCLEOTIDE SEQUENCE [LARGE SCALE MRNA]</scope>
    <source>
        <strain>cv. Columbia</strain>
    </source>
</reference>
<reference key="4">
    <citation type="submission" date="2002-03" db="EMBL/GenBank/DDBJ databases">
        <title>Full-length cDNA from Arabidopsis thaliana.</title>
        <authorList>
            <person name="Brover V.V."/>
            <person name="Troukhan M.E."/>
            <person name="Alexandrov N.A."/>
            <person name="Lu Y.-P."/>
            <person name="Flavell R.B."/>
            <person name="Feldmann K.A."/>
        </authorList>
    </citation>
    <scope>NUCLEOTIDE SEQUENCE [LARGE SCALE MRNA]</scope>
</reference>
<reference key="5">
    <citation type="journal article" date="2017" name="Proc. Natl. Acad. Sci. U.S.A.">
        <title>MPSR1 is a cytoplasmic PQC E3 ligase for eliminating emergent misfolded proteins in Arabidopsis thaliana.</title>
        <authorList>
            <person name="Kim J.H."/>
            <person name="Cho S.K."/>
            <person name="Oh T.R."/>
            <person name="Ryu M.Y."/>
            <person name="Yang S.W."/>
            <person name="Kim W.T."/>
        </authorList>
    </citation>
    <scope>FUNCTION</scope>
    <scope>CATALYTIC ACTIVITY</scope>
    <scope>SUBCELLULAR LOCATION</scope>
    <scope>INDUCTION</scope>
    <scope>AUTOUBIQUITINATION</scope>
</reference>
<gene>
    <name evidence="3" type="primary">MPSR1</name>
    <name evidence="5" type="ordered locus">At1g26800</name>
    <name evidence="6" type="ORF">T24P13.19</name>
</gene>
<feature type="chain" id="PRO_0000442932" description="E3 ubiquitin-protein ligase MPSR1">
    <location>
        <begin position="1"/>
        <end position="204"/>
    </location>
</feature>
<feature type="zinc finger region" description="RING-type; atypical" evidence="1">
    <location>
        <begin position="113"/>
        <end position="154"/>
    </location>
</feature>
<feature type="sequence conflict" description="In Ref. 4; AAM63417." evidence="4" ref="4">
    <original>E</original>
    <variation>D</variation>
    <location>
        <position position="6"/>
    </location>
</feature>
<feature type="sequence conflict" description="In Ref. 4; AAM63417." evidence="4" ref="4">
    <original>S</original>
    <variation>P</variation>
    <location>
        <position position="14"/>
    </location>
</feature>